<evidence type="ECO:0000250" key="1">
    <source>
        <dbReference type="UniProtKB" id="Q7X993"/>
    </source>
</evidence>
<evidence type="ECO:0000255" key="2">
    <source>
        <dbReference type="PROSITE-ProRule" id="PRU00978"/>
    </source>
</evidence>
<evidence type="ECO:0000255" key="3">
    <source>
        <dbReference type="PROSITE-ProRule" id="PRU01147"/>
    </source>
</evidence>
<evidence type="ECO:0000256" key="4">
    <source>
        <dbReference type="SAM" id="MobiDB-lite"/>
    </source>
</evidence>
<evidence type="ECO:0000303" key="5">
    <source>
    </source>
</evidence>
<evidence type="ECO:0000303" key="6">
    <source>
    </source>
</evidence>
<evidence type="ECO:0000305" key="7"/>
<evidence type="ECO:0000312" key="8">
    <source>
        <dbReference type="EMBL" id="ABA95838.1"/>
    </source>
</evidence>
<evidence type="ECO:0000312" key="9">
    <source>
        <dbReference type="EMBL" id="BAF29198.2"/>
    </source>
</evidence>
<evidence type="ECO:0000312" key="10">
    <source>
        <dbReference type="EMBL" id="EEE52783.1"/>
    </source>
</evidence>
<sequence>MGEARRGQNPHHVLGYGFHGTTLPNSMASANLFEQGGGGGGGAAYFGELEEALVHQVATLRRRAQQTATTTTSHHGHTTPFSTAAAAATATATARPPATLDIFPSWPMRRSSLPTPKDGCSNVTADTTDSESSSKNNGDQGAAAADMASQFDQIPQQQQKQHKKMAASSTHSDHRMTKTLDPKIMRRLAQNREAARKSRLRKKAYIQQLESSKLRLAQMEQDLERARSQGLLLGGSPGGNTSAGAAMFDAEYGRWLEDGGRRMAELHGGLHAHLPDGDLRAIVDDALAHYDELFRLRAAAAKADVFHLITGTWATPAERCFLWMGGFQPSDLLKTVAPQLDPLTEQQVVGICSLQQSSQQAEEALSQGLEQLHQSLAETVANGGSVVNEASLGSFMGYMALALGKLSNLEGFVIQADNLRQQTLHQMHRILTIRQAARCFLAIGEYHNRLRALSSLWASRPREILVADEGNCGELSIAAQPSESQFSAF</sequence>
<dbReference type="EMBL" id="FJ750929">
    <property type="protein sequence ID" value="ACY26059.1"/>
    <property type="molecule type" value="mRNA"/>
</dbReference>
<dbReference type="EMBL" id="DP000011">
    <property type="protein sequence ID" value="ABA95838.1"/>
    <property type="molecule type" value="Genomic_DNA"/>
</dbReference>
<dbReference type="EMBL" id="AP008218">
    <property type="protein sequence ID" value="BAF29198.2"/>
    <property type="molecule type" value="Genomic_DNA"/>
</dbReference>
<dbReference type="EMBL" id="AP014968">
    <property type="protein sequence ID" value="BAT15928.1"/>
    <property type="molecule type" value="Genomic_DNA"/>
</dbReference>
<dbReference type="EMBL" id="CM000149">
    <property type="protein sequence ID" value="EEE52783.1"/>
    <property type="molecule type" value="Genomic_DNA"/>
</dbReference>
<dbReference type="EMBL" id="AK101620">
    <property type="protein sequence ID" value="BAG95157.1"/>
    <property type="molecule type" value="mRNA"/>
</dbReference>
<dbReference type="RefSeq" id="XP_015619722.1">
    <property type="nucleotide sequence ID" value="XM_015764236.1"/>
</dbReference>
<dbReference type="SMR" id="Q2QXL0"/>
<dbReference type="STRING" id="39947.Q2QXL0"/>
<dbReference type="PaxDb" id="39947-Q2QXL0"/>
<dbReference type="EnsemblPlants" id="Os12t0152900-01">
    <property type="protein sequence ID" value="Os12t0152900-01"/>
    <property type="gene ID" value="Os12g0152900"/>
</dbReference>
<dbReference type="Gramene" id="Os12t0152900-01">
    <property type="protein sequence ID" value="Os12t0152900-01"/>
    <property type="gene ID" value="Os12g0152900"/>
</dbReference>
<dbReference type="KEGG" id="dosa:Os12g0152900"/>
<dbReference type="eggNOG" id="ENOG502QRFK">
    <property type="taxonomic scope" value="Eukaryota"/>
</dbReference>
<dbReference type="HOGENOM" id="CLU_024782_0_3_1"/>
<dbReference type="InParanoid" id="Q2QXL0"/>
<dbReference type="OMA" id="QQDMASD"/>
<dbReference type="OrthoDB" id="2015618at2759"/>
<dbReference type="PlantReactome" id="R-OSA-6788019">
    <property type="pathway name" value="Salicylic acid signaling"/>
</dbReference>
<dbReference type="Proteomes" id="UP000000763">
    <property type="component" value="Chromosome 12"/>
</dbReference>
<dbReference type="Proteomes" id="UP000007752">
    <property type="component" value="Chromosome 12"/>
</dbReference>
<dbReference type="Proteomes" id="UP000059680">
    <property type="component" value="Chromosome 12"/>
</dbReference>
<dbReference type="GO" id="GO:0005634">
    <property type="term" value="C:nucleus"/>
    <property type="evidence" value="ECO:0007669"/>
    <property type="project" value="UniProtKB-SubCell"/>
</dbReference>
<dbReference type="GO" id="GO:0003700">
    <property type="term" value="F:DNA-binding transcription factor activity"/>
    <property type="evidence" value="ECO:0007669"/>
    <property type="project" value="InterPro"/>
</dbReference>
<dbReference type="GO" id="GO:0043565">
    <property type="term" value="F:sequence-specific DNA binding"/>
    <property type="evidence" value="ECO:0007669"/>
    <property type="project" value="InterPro"/>
</dbReference>
<dbReference type="GO" id="GO:0006952">
    <property type="term" value="P:defense response"/>
    <property type="evidence" value="ECO:0007669"/>
    <property type="project" value="UniProtKB-KW"/>
</dbReference>
<dbReference type="GO" id="GO:0006351">
    <property type="term" value="P:DNA-templated transcription"/>
    <property type="evidence" value="ECO:0007669"/>
    <property type="project" value="InterPro"/>
</dbReference>
<dbReference type="FunFam" id="1.20.5.170:FF:000019">
    <property type="entry name" value="BZIP family transcription factor"/>
    <property type="match status" value="1"/>
</dbReference>
<dbReference type="Gene3D" id="1.20.5.170">
    <property type="match status" value="1"/>
</dbReference>
<dbReference type="InterPro" id="IPR004827">
    <property type="entry name" value="bZIP"/>
</dbReference>
<dbReference type="InterPro" id="IPR046347">
    <property type="entry name" value="bZIP_sf"/>
</dbReference>
<dbReference type="InterPro" id="IPR025422">
    <property type="entry name" value="TGA_domain"/>
</dbReference>
<dbReference type="PANTHER" id="PTHR45693">
    <property type="entry name" value="TRANSCRIPTION FACTOR TGA9"/>
    <property type="match status" value="1"/>
</dbReference>
<dbReference type="PANTHER" id="PTHR45693:SF28">
    <property type="entry name" value="TRANSCRIPTION FACTOR TGAL4"/>
    <property type="match status" value="1"/>
</dbReference>
<dbReference type="Pfam" id="PF00170">
    <property type="entry name" value="bZIP_1"/>
    <property type="match status" value="1"/>
</dbReference>
<dbReference type="Pfam" id="PF14144">
    <property type="entry name" value="DOG1"/>
    <property type="match status" value="1"/>
</dbReference>
<dbReference type="SMART" id="SM00338">
    <property type="entry name" value="BRLZ"/>
    <property type="match status" value="1"/>
</dbReference>
<dbReference type="SUPFAM" id="SSF57959">
    <property type="entry name" value="Leucine zipper domain"/>
    <property type="match status" value="1"/>
</dbReference>
<dbReference type="PROSITE" id="PS50217">
    <property type="entry name" value="BZIP"/>
    <property type="match status" value="1"/>
</dbReference>
<dbReference type="PROSITE" id="PS00036">
    <property type="entry name" value="BZIP_BASIC"/>
    <property type="match status" value="1"/>
</dbReference>
<dbReference type="PROSITE" id="PS51806">
    <property type="entry name" value="DOG1"/>
    <property type="match status" value="1"/>
</dbReference>
<gene>
    <name evidence="6" type="primary">TGAL11</name>
    <name evidence="9" type="ordered locus">Os12g0152900</name>
    <name evidence="8" type="ordered locus">LOC_Os12g05680</name>
    <name evidence="10" type="ORF">OsJ_35251</name>
</gene>
<name>TGL11_ORYSJ</name>
<comment type="function">
    <text evidence="1">Transcriptional regulator involved in defense response.</text>
</comment>
<comment type="subcellular location">
    <subcellularLocation>
        <location evidence="2">Nucleus</location>
    </subcellularLocation>
</comment>
<comment type="similarity">
    <text evidence="7">Belongs to the bZIP family.</text>
</comment>
<protein>
    <recommendedName>
        <fullName evidence="7">Transcription factor TGAL11</fullName>
    </recommendedName>
    <alternativeName>
        <fullName evidence="5">bZIP transcription factor 83</fullName>
        <shortName evidence="5">OsbZIP83</shortName>
    </alternativeName>
</protein>
<accession>Q2QXL0</accession>
<accession>D3U2G1</accession>
<accession>Q0IQ17</accession>
<reference key="1">
    <citation type="submission" date="2009-02" db="EMBL/GenBank/DDBJ databases">
        <title>Molecular cloning of DNA-binding protein gene in rice.</title>
        <authorList>
            <person name="Yoon U.H."/>
            <person name="Kim Y.H."/>
        </authorList>
    </citation>
    <scope>NUCLEOTIDE SEQUENCE [MRNA]</scope>
</reference>
<reference key="2">
    <citation type="journal article" date="2005" name="BMC Biol.">
        <title>The sequence of rice chromosomes 11 and 12, rich in disease resistance genes and recent gene duplications.</title>
        <authorList>
            <consortium name="The rice chromosomes 11 and 12 sequencing consortia"/>
        </authorList>
    </citation>
    <scope>NUCLEOTIDE SEQUENCE [LARGE SCALE GENOMIC DNA]</scope>
    <source>
        <strain>cv. Nipponbare</strain>
    </source>
</reference>
<reference key="3">
    <citation type="journal article" date="2005" name="Nature">
        <title>The map-based sequence of the rice genome.</title>
        <authorList>
            <consortium name="International rice genome sequencing project (IRGSP)"/>
        </authorList>
    </citation>
    <scope>NUCLEOTIDE SEQUENCE [LARGE SCALE GENOMIC DNA]</scope>
    <source>
        <strain>cv. Nipponbare</strain>
    </source>
</reference>
<reference key="4">
    <citation type="journal article" date="2008" name="Nucleic Acids Res.">
        <title>The rice annotation project database (RAP-DB): 2008 update.</title>
        <authorList>
            <consortium name="The rice annotation project (RAP)"/>
        </authorList>
    </citation>
    <scope>GENOME REANNOTATION</scope>
    <source>
        <strain>cv. Nipponbare</strain>
    </source>
</reference>
<reference key="5">
    <citation type="journal article" date="2013" name="Rice">
        <title>Improvement of the Oryza sativa Nipponbare reference genome using next generation sequence and optical map data.</title>
        <authorList>
            <person name="Kawahara Y."/>
            <person name="de la Bastide M."/>
            <person name="Hamilton J.P."/>
            <person name="Kanamori H."/>
            <person name="McCombie W.R."/>
            <person name="Ouyang S."/>
            <person name="Schwartz D.C."/>
            <person name="Tanaka T."/>
            <person name="Wu J."/>
            <person name="Zhou S."/>
            <person name="Childs K.L."/>
            <person name="Davidson R.M."/>
            <person name="Lin H."/>
            <person name="Quesada-Ocampo L."/>
            <person name="Vaillancourt B."/>
            <person name="Sakai H."/>
            <person name="Lee S.S."/>
            <person name="Kim J."/>
            <person name="Numa H."/>
            <person name="Itoh T."/>
            <person name="Buell C.R."/>
            <person name="Matsumoto T."/>
        </authorList>
    </citation>
    <scope>GENOME REANNOTATION</scope>
    <source>
        <strain>cv. Nipponbare</strain>
    </source>
</reference>
<reference key="6">
    <citation type="journal article" date="2005" name="PLoS Biol.">
        <title>The genomes of Oryza sativa: a history of duplications.</title>
        <authorList>
            <person name="Yu J."/>
            <person name="Wang J."/>
            <person name="Lin W."/>
            <person name="Li S."/>
            <person name="Li H."/>
            <person name="Zhou J."/>
            <person name="Ni P."/>
            <person name="Dong W."/>
            <person name="Hu S."/>
            <person name="Zeng C."/>
            <person name="Zhang J."/>
            <person name="Zhang Y."/>
            <person name="Li R."/>
            <person name="Xu Z."/>
            <person name="Li S."/>
            <person name="Li X."/>
            <person name="Zheng H."/>
            <person name="Cong L."/>
            <person name="Lin L."/>
            <person name="Yin J."/>
            <person name="Geng J."/>
            <person name="Li G."/>
            <person name="Shi J."/>
            <person name="Liu J."/>
            <person name="Lv H."/>
            <person name="Li J."/>
            <person name="Wang J."/>
            <person name="Deng Y."/>
            <person name="Ran L."/>
            <person name="Shi X."/>
            <person name="Wang X."/>
            <person name="Wu Q."/>
            <person name="Li C."/>
            <person name="Ren X."/>
            <person name="Wang J."/>
            <person name="Wang X."/>
            <person name="Li D."/>
            <person name="Liu D."/>
            <person name="Zhang X."/>
            <person name="Ji Z."/>
            <person name="Zhao W."/>
            <person name="Sun Y."/>
            <person name="Zhang Z."/>
            <person name="Bao J."/>
            <person name="Han Y."/>
            <person name="Dong L."/>
            <person name="Ji J."/>
            <person name="Chen P."/>
            <person name="Wu S."/>
            <person name="Liu J."/>
            <person name="Xiao Y."/>
            <person name="Bu D."/>
            <person name="Tan J."/>
            <person name="Yang L."/>
            <person name="Ye C."/>
            <person name="Zhang J."/>
            <person name="Xu J."/>
            <person name="Zhou Y."/>
            <person name="Yu Y."/>
            <person name="Zhang B."/>
            <person name="Zhuang S."/>
            <person name="Wei H."/>
            <person name="Liu B."/>
            <person name="Lei M."/>
            <person name="Yu H."/>
            <person name="Li Y."/>
            <person name="Xu H."/>
            <person name="Wei S."/>
            <person name="He X."/>
            <person name="Fang L."/>
            <person name="Zhang Z."/>
            <person name="Zhang Y."/>
            <person name="Huang X."/>
            <person name="Su Z."/>
            <person name="Tong W."/>
            <person name="Li J."/>
            <person name="Tong Z."/>
            <person name="Li S."/>
            <person name="Ye J."/>
            <person name="Wang L."/>
            <person name="Fang L."/>
            <person name="Lei T."/>
            <person name="Chen C.-S."/>
            <person name="Chen H.-C."/>
            <person name="Xu Z."/>
            <person name="Li H."/>
            <person name="Huang H."/>
            <person name="Zhang F."/>
            <person name="Xu H."/>
            <person name="Li N."/>
            <person name="Zhao C."/>
            <person name="Li S."/>
            <person name="Dong L."/>
            <person name="Huang Y."/>
            <person name="Li L."/>
            <person name="Xi Y."/>
            <person name="Qi Q."/>
            <person name="Li W."/>
            <person name="Zhang B."/>
            <person name="Hu W."/>
            <person name="Zhang Y."/>
            <person name="Tian X."/>
            <person name="Jiao Y."/>
            <person name="Liang X."/>
            <person name="Jin J."/>
            <person name="Gao L."/>
            <person name="Zheng W."/>
            <person name="Hao B."/>
            <person name="Liu S.-M."/>
            <person name="Wang W."/>
            <person name="Yuan L."/>
            <person name="Cao M."/>
            <person name="McDermott J."/>
            <person name="Samudrala R."/>
            <person name="Wang J."/>
            <person name="Wong G.K.-S."/>
            <person name="Yang H."/>
        </authorList>
    </citation>
    <scope>NUCLEOTIDE SEQUENCE [LARGE SCALE GENOMIC DNA]</scope>
    <source>
        <strain>cv. Nipponbare</strain>
    </source>
</reference>
<reference key="7">
    <citation type="journal article" date="2003" name="Science">
        <title>Collection, mapping, and annotation of over 28,000 cDNA clones from japonica rice.</title>
        <authorList>
            <consortium name="The rice full-length cDNA consortium"/>
        </authorList>
    </citation>
    <scope>NUCLEOTIDE SEQUENCE [LARGE SCALE MRNA]</scope>
    <source>
        <strain>cv. Nipponbare</strain>
    </source>
</reference>
<reference key="8">
    <citation type="journal article" date="2008" name="Plant Physiol.">
        <title>Genomic survey and gene expression analysis of the basic leucine zipper transcription factor family in rice.</title>
        <authorList>
            <person name="Nijhawan A."/>
            <person name="Jain M."/>
            <person name="Tyagi A.K."/>
            <person name="Khurana J.P."/>
        </authorList>
    </citation>
    <scope>GENE FAMILY</scope>
    <scope>NOMENCLATURE</scope>
</reference>
<reference key="9">
    <citation type="journal article" date="2014" name="BMC Genomics">
        <title>Interaction specificity and coexpression of rice NPR1 homologs 1 and 3 (NH1 and NH3), TGA transcription factors and negative regulator of resistance (NRR) proteins.</title>
        <authorList>
            <person name="Chern M."/>
            <person name="Bai W."/>
            <person name="Ruan D."/>
            <person name="Oh T."/>
            <person name="Chen X."/>
            <person name="Ronald P.C."/>
        </authorList>
    </citation>
    <scope>INTERACTION WITH NPR2/NH2</scope>
</reference>
<proteinExistence type="evidence at protein level"/>
<feature type="chain" id="PRO_0000437025" description="Transcription factor TGAL11">
    <location>
        <begin position="1"/>
        <end position="489"/>
    </location>
</feature>
<feature type="domain" description="bZIP" evidence="2">
    <location>
        <begin position="181"/>
        <end position="225"/>
    </location>
</feature>
<feature type="domain" description="DOG1" evidence="3">
    <location>
        <begin position="245"/>
        <end position="460"/>
    </location>
</feature>
<feature type="region of interest" description="Disordered" evidence="4">
    <location>
        <begin position="87"/>
        <end position="181"/>
    </location>
</feature>
<feature type="region of interest" description="Basic motif" evidence="2">
    <location>
        <begin position="183"/>
        <end position="203"/>
    </location>
</feature>
<feature type="region of interest" description="Leucine-zipper" evidence="2">
    <location>
        <begin position="209"/>
        <end position="223"/>
    </location>
</feature>
<feature type="compositionally biased region" description="Low complexity" evidence="4">
    <location>
        <begin position="87"/>
        <end position="99"/>
    </location>
</feature>
<feature type="compositionally biased region" description="Polar residues" evidence="4">
    <location>
        <begin position="121"/>
        <end position="139"/>
    </location>
</feature>
<feature type="compositionally biased region" description="Low complexity" evidence="4">
    <location>
        <begin position="148"/>
        <end position="159"/>
    </location>
</feature>
<feature type="compositionally biased region" description="Basic and acidic residues" evidence="4">
    <location>
        <begin position="171"/>
        <end position="181"/>
    </location>
</feature>
<organism>
    <name type="scientific">Oryza sativa subsp. japonica</name>
    <name type="common">Rice</name>
    <dbReference type="NCBI Taxonomy" id="39947"/>
    <lineage>
        <taxon>Eukaryota</taxon>
        <taxon>Viridiplantae</taxon>
        <taxon>Streptophyta</taxon>
        <taxon>Embryophyta</taxon>
        <taxon>Tracheophyta</taxon>
        <taxon>Spermatophyta</taxon>
        <taxon>Magnoliopsida</taxon>
        <taxon>Liliopsida</taxon>
        <taxon>Poales</taxon>
        <taxon>Poaceae</taxon>
        <taxon>BOP clade</taxon>
        <taxon>Oryzoideae</taxon>
        <taxon>Oryzeae</taxon>
        <taxon>Oryzinae</taxon>
        <taxon>Oryza</taxon>
        <taxon>Oryza sativa</taxon>
    </lineage>
</organism>
<keyword id="KW-0238">DNA-binding</keyword>
<keyword id="KW-0539">Nucleus</keyword>
<keyword id="KW-0611">Plant defense</keyword>
<keyword id="KW-1185">Reference proteome</keyword>
<keyword id="KW-0804">Transcription</keyword>
<keyword id="KW-0805">Transcription regulation</keyword>